<gene>
    <name type="primary">erd1</name>
    <name type="ORF">SPAC227.01c</name>
    <name type="ORF">SPAPB21F2.04c</name>
</gene>
<accession>Q9UTD8</accession>
<accession>Q9C0Z2</accession>
<feature type="chain" id="PRO_0000116788" description="Protein ERD1 homolog 1">
    <location>
        <begin position="1"/>
        <end position="373"/>
    </location>
</feature>
<feature type="transmembrane region" description="Helical" evidence="2">
    <location>
        <begin position="20"/>
        <end position="40"/>
    </location>
</feature>
<feature type="transmembrane region" description="Helical" evidence="2">
    <location>
        <begin position="69"/>
        <end position="89"/>
    </location>
</feature>
<feature type="transmembrane region" description="Helical" evidence="2">
    <location>
        <begin position="97"/>
        <end position="117"/>
    </location>
</feature>
<feature type="transmembrane region" description="Helical" evidence="2">
    <location>
        <begin position="149"/>
        <end position="169"/>
    </location>
</feature>
<feature type="transmembrane region" description="Helical" evidence="2">
    <location>
        <begin position="216"/>
        <end position="236"/>
    </location>
</feature>
<feature type="transmembrane region" description="Helical" evidence="2">
    <location>
        <begin position="242"/>
        <end position="262"/>
    </location>
</feature>
<feature type="transmembrane region" description="Helical" evidence="2">
    <location>
        <begin position="291"/>
        <end position="311"/>
    </location>
</feature>
<feature type="domain" description="EXS" evidence="3">
    <location>
        <begin position="178"/>
        <end position="373"/>
    </location>
</feature>
<protein>
    <recommendedName>
        <fullName>Protein ERD1 homolog 1</fullName>
    </recommendedName>
</protein>
<proteinExistence type="inferred from homology"/>
<organism>
    <name type="scientific">Schizosaccharomyces pombe (strain 972 / ATCC 24843)</name>
    <name type="common">Fission yeast</name>
    <dbReference type="NCBI Taxonomy" id="284812"/>
    <lineage>
        <taxon>Eukaryota</taxon>
        <taxon>Fungi</taxon>
        <taxon>Dikarya</taxon>
        <taxon>Ascomycota</taxon>
        <taxon>Taphrinomycotina</taxon>
        <taxon>Schizosaccharomycetes</taxon>
        <taxon>Schizosaccharomycetales</taxon>
        <taxon>Schizosaccharomycetaceae</taxon>
        <taxon>Schizosaccharomyces</taxon>
    </lineage>
</organism>
<keyword id="KW-0256">Endoplasmic reticulum</keyword>
<keyword id="KW-0472">Membrane</keyword>
<keyword id="KW-0653">Protein transport</keyword>
<keyword id="KW-1185">Reference proteome</keyword>
<keyword id="KW-0812">Transmembrane</keyword>
<keyword id="KW-1133">Transmembrane helix</keyword>
<keyword id="KW-0813">Transport</keyword>
<keyword id="KW-0926">Vacuole</keyword>
<sequence length="373" mass="43627">MALIEDLNHFINYFPLVLRLFFLVVFGLYSFTLILHLLVINRVDVFSLLHTPLPVNRSQQANAPLWQLSFSLSILGTLLFVIAESLYLISGSDELAYVPVFIFGVIVFMPVHKFWFFQRKVFTRQCLRILGGSYRPDYKFPDVIFSDLLTSYSRVIADLWLAGAILIYVTDSPNNSHRKQYENEVIMSMIAAYPYAIRFRQCLIERSSADNSSDKFWSTLNSIKYFTAFPAIFLGIFAKKRFSFLWFLWNTSSAINSTYSFWWDVSMDWSLPFFKQPLSIQNWKFGVRRLFPTFTFAVVSAIDFVLRMAWVVRVLPEHQSAFFTTDFGIFIMQFLEVFRRCVWVFFRIEAEASKSLAYVNISDRSDIPTIHPD</sequence>
<dbReference type="EMBL" id="CU329670">
    <property type="protein sequence ID" value="CAC36893.2"/>
    <property type="molecule type" value="Genomic_DNA"/>
</dbReference>
<dbReference type="PIR" id="T50157">
    <property type="entry name" value="T50157"/>
</dbReference>
<dbReference type="RefSeq" id="NP_592955.2">
    <property type="nucleotide sequence ID" value="NM_001018355.2"/>
</dbReference>
<dbReference type="SMR" id="Q9UTD8"/>
<dbReference type="BioGRID" id="278399">
    <property type="interactions" value="70"/>
</dbReference>
<dbReference type="FunCoup" id="Q9UTD8">
    <property type="interactions" value="359"/>
</dbReference>
<dbReference type="STRING" id="284812.Q9UTD8"/>
<dbReference type="PaxDb" id="4896-SPAC227.01c.1"/>
<dbReference type="EnsemblFungi" id="SPAC227.01c.1">
    <property type="protein sequence ID" value="SPAC227.01c.1:pep"/>
    <property type="gene ID" value="SPAC227.01c"/>
</dbReference>
<dbReference type="GeneID" id="2541909"/>
<dbReference type="KEGG" id="spo:2541909"/>
<dbReference type="PomBase" id="SPAC227.01c">
    <property type="gene designation" value="erd1"/>
</dbReference>
<dbReference type="VEuPathDB" id="FungiDB:SPAC227.01c"/>
<dbReference type="eggNOG" id="KOG1162">
    <property type="taxonomic scope" value="Eukaryota"/>
</dbReference>
<dbReference type="HOGENOM" id="CLU_024081_2_1_1"/>
<dbReference type="InParanoid" id="Q9UTD8"/>
<dbReference type="OMA" id="FRRWIWI"/>
<dbReference type="PhylomeDB" id="Q9UTD8"/>
<dbReference type="PRO" id="PR:Q9UTD8"/>
<dbReference type="Proteomes" id="UP000002485">
    <property type="component" value="Chromosome I"/>
</dbReference>
<dbReference type="GO" id="GO:0005789">
    <property type="term" value="C:endoplasmic reticulum membrane"/>
    <property type="evidence" value="ECO:0007669"/>
    <property type="project" value="UniProtKB-SubCell"/>
</dbReference>
<dbReference type="GO" id="GO:0000139">
    <property type="term" value="C:Golgi membrane"/>
    <property type="evidence" value="ECO:0000314"/>
    <property type="project" value="PomBase"/>
</dbReference>
<dbReference type="GO" id="GO:0005802">
    <property type="term" value="C:trans-Golgi network"/>
    <property type="evidence" value="ECO:0000318"/>
    <property type="project" value="GO_Central"/>
</dbReference>
<dbReference type="GO" id="GO:0005774">
    <property type="term" value="C:vacuolar membrane"/>
    <property type="evidence" value="ECO:0007669"/>
    <property type="project" value="UniProtKB-SubCell"/>
</dbReference>
<dbReference type="GO" id="GO:0015031">
    <property type="term" value="P:protein transport"/>
    <property type="evidence" value="ECO:0007669"/>
    <property type="project" value="UniProtKB-KW"/>
</dbReference>
<dbReference type="GO" id="GO:0006890">
    <property type="term" value="P:retrograde vesicle-mediated transport, Golgi to endoplasmic reticulum"/>
    <property type="evidence" value="ECO:0000315"/>
    <property type="project" value="PomBase"/>
</dbReference>
<dbReference type="InterPro" id="IPR004342">
    <property type="entry name" value="EXS_C"/>
</dbReference>
<dbReference type="PANTHER" id="PTHR10783:SF136">
    <property type="entry name" value="PROTEIN ERD1 HOMOLOG 1"/>
    <property type="match status" value="1"/>
</dbReference>
<dbReference type="PANTHER" id="PTHR10783">
    <property type="entry name" value="XENOTROPIC AND POLYTROPIC RETROVIRUS RECEPTOR 1-RELATED"/>
    <property type="match status" value="1"/>
</dbReference>
<dbReference type="Pfam" id="PF03124">
    <property type="entry name" value="EXS"/>
    <property type="match status" value="1"/>
</dbReference>
<dbReference type="PROSITE" id="PS51380">
    <property type="entry name" value="EXS"/>
    <property type="match status" value="1"/>
</dbReference>
<comment type="function">
    <text evidence="1">Required for the retention of luminal endoplasmic reticulum proteins, affects glycoprotein processing in the Golgi apparatus.</text>
</comment>
<comment type="subcellular location">
    <subcellularLocation>
        <location evidence="4">Vacuole membrane</location>
        <topology evidence="4">Multi-pass membrane protein</topology>
    </subcellularLocation>
    <subcellularLocation>
        <location evidence="1">Endoplasmic reticulum membrane</location>
        <topology evidence="1">Multi-pass membrane protein</topology>
    </subcellularLocation>
</comment>
<comment type="similarity">
    <text evidence="5">Belongs to the ERD1 family.</text>
</comment>
<reference key="1">
    <citation type="journal article" date="2002" name="Nature">
        <title>The genome sequence of Schizosaccharomyces pombe.</title>
        <authorList>
            <person name="Wood V."/>
            <person name="Gwilliam R."/>
            <person name="Rajandream M.A."/>
            <person name="Lyne M.H."/>
            <person name="Lyne R."/>
            <person name="Stewart A."/>
            <person name="Sgouros J.G."/>
            <person name="Peat N."/>
            <person name="Hayles J."/>
            <person name="Baker S.G."/>
            <person name="Basham D."/>
            <person name="Bowman S."/>
            <person name="Brooks K."/>
            <person name="Brown D."/>
            <person name="Brown S."/>
            <person name="Chillingworth T."/>
            <person name="Churcher C.M."/>
            <person name="Collins M."/>
            <person name="Connor R."/>
            <person name="Cronin A."/>
            <person name="Davis P."/>
            <person name="Feltwell T."/>
            <person name="Fraser A."/>
            <person name="Gentles S."/>
            <person name="Goble A."/>
            <person name="Hamlin N."/>
            <person name="Harris D.E."/>
            <person name="Hidalgo J."/>
            <person name="Hodgson G."/>
            <person name="Holroyd S."/>
            <person name="Hornsby T."/>
            <person name="Howarth S."/>
            <person name="Huckle E.J."/>
            <person name="Hunt S."/>
            <person name="Jagels K."/>
            <person name="James K.D."/>
            <person name="Jones L."/>
            <person name="Jones M."/>
            <person name="Leather S."/>
            <person name="McDonald S."/>
            <person name="McLean J."/>
            <person name="Mooney P."/>
            <person name="Moule S."/>
            <person name="Mungall K.L."/>
            <person name="Murphy L.D."/>
            <person name="Niblett D."/>
            <person name="Odell C."/>
            <person name="Oliver K."/>
            <person name="O'Neil S."/>
            <person name="Pearson D."/>
            <person name="Quail M.A."/>
            <person name="Rabbinowitsch E."/>
            <person name="Rutherford K.M."/>
            <person name="Rutter S."/>
            <person name="Saunders D."/>
            <person name="Seeger K."/>
            <person name="Sharp S."/>
            <person name="Skelton J."/>
            <person name="Simmonds M.N."/>
            <person name="Squares R."/>
            <person name="Squares S."/>
            <person name="Stevens K."/>
            <person name="Taylor K."/>
            <person name="Taylor R.G."/>
            <person name="Tivey A."/>
            <person name="Walsh S.V."/>
            <person name="Warren T."/>
            <person name="Whitehead S."/>
            <person name="Woodward J.R."/>
            <person name="Volckaert G."/>
            <person name="Aert R."/>
            <person name="Robben J."/>
            <person name="Grymonprez B."/>
            <person name="Weltjens I."/>
            <person name="Vanstreels E."/>
            <person name="Rieger M."/>
            <person name="Schaefer M."/>
            <person name="Mueller-Auer S."/>
            <person name="Gabel C."/>
            <person name="Fuchs M."/>
            <person name="Duesterhoeft A."/>
            <person name="Fritzc C."/>
            <person name="Holzer E."/>
            <person name="Moestl D."/>
            <person name="Hilbert H."/>
            <person name="Borzym K."/>
            <person name="Langer I."/>
            <person name="Beck A."/>
            <person name="Lehrach H."/>
            <person name="Reinhardt R."/>
            <person name="Pohl T.M."/>
            <person name="Eger P."/>
            <person name="Zimmermann W."/>
            <person name="Wedler H."/>
            <person name="Wambutt R."/>
            <person name="Purnelle B."/>
            <person name="Goffeau A."/>
            <person name="Cadieu E."/>
            <person name="Dreano S."/>
            <person name="Gloux S."/>
            <person name="Lelaure V."/>
            <person name="Mottier S."/>
            <person name="Galibert F."/>
            <person name="Aves S.J."/>
            <person name="Xiang Z."/>
            <person name="Hunt C."/>
            <person name="Moore K."/>
            <person name="Hurst S.M."/>
            <person name="Lucas M."/>
            <person name="Rochet M."/>
            <person name="Gaillardin C."/>
            <person name="Tallada V.A."/>
            <person name="Garzon A."/>
            <person name="Thode G."/>
            <person name="Daga R.R."/>
            <person name="Cruzado L."/>
            <person name="Jimenez J."/>
            <person name="Sanchez M."/>
            <person name="del Rey F."/>
            <person name="Benito J."/>
            <person name="Dominguez A."/>
            <person name="Revuelta J.L."/>
            <person name="Moreno S."/>
            <person name="Armstrong J."/>
            <person name="Forsburg S.L."/>
            <person name="Cerutti L."/>
            <person name="Lowe T."/>
            <person name="McCombie W.R."/>
            <person name="Paulsen I."/>
            <person name="Potashkin J."/>
            <person name="Shpakovski G.V."/>
            <person name="Ussery D."/>
            <person name="Barrell B.G."/>
            <person name="Nurse P."/>
        </authorList>
    </citation>
    <scope>NUCLEOTIDE SEQUENCE [LARGE SCALE GENOMIC DNA]</scope>
    <source>
        <strain>972 / ATCC 24843</strain>
    </source>
</reference>
<reference key="2">
    <citation type="journal article" date="2006" name="Nat. Biotechnol.">
        <title>ORFeome cloning and global analysis of protein localization in the fission yeast Schizosaccharomyces pombe.</title>
        <authorList>
            <person name="Matsuyama A."/>
            <person name="Arai R."/>
            <person name="Yashiroda Y."/>
            <person name="Shirai A."/>
            <person name="Kamata A."/>
            <person name="Sekido S."/>
            <person name="Kobayashi Y."/>
            <person name="Hashimoto A."/>
            <person name="Hamamoto M."/>
            <person name="Hiraoka Y."/>
            <person name="Horinouchi S."/>
            <person name="Yoshida M."/>
        </authorList>
    </citation>
    <scope>SUBCELLULAR LOCATION [LARGE SCALE ANALYSIS]</scope>
</reference>
<evidence type="ECO:0000250" key="1"/>
<evidence type="ECO:0000255" key="2"/>
<evidence type="ECO:0000255" key="3">
    <source>
        <dbReference type="PROSITE-ProRule" id="PRU00712"/>
    </source>
</evidence>
<evidence type="ECO:0000269" key="4">
    <source>
    </source>
</evidence>
<evidence type="ECO:0000305" key="5"/>
<name>ERD11_SCHPO</name>